<keyword id="KW-1185">Reference proteome</keyword>
<keyword id="KW-0687">Ribonucleoprotein</keyword>
<keyword id="KW-0689">Ribosomal protein</keyword>
<gene>
    <name evidence="1" type="primary">rpmJ</name>
    <name type="ordered locus">TTE2267</name>
</gene>
<proteinExistence type="inferred from homology"/>
<sequence>MKVRPSVKKMCEKCKIIKRKGRVMVICENPKHKQKQG</sequence>
<name>RL36_CALS4</name>
<organism>
    <name type="scientific">Caldanaerobacter subterraneus subsp. tengcongensis (strain DSM 15242 / JCM 11007 / NBRC 100824 / MB4)</name>
    <name type="common">Thermoanaerobacter tengcongensis</name>
    <dbReference type="NCBI Taxonomy" id="273068"/>
    <lineage>
        <taxon>Bacteria</taxon>
        <taxon>Bacillati</taxon>
        <taxon>Bacillota</taxon>
        <taxon>Clostridia</taxon>
        <taxon>Thermoanaerobacterales</taxon>
        <taxon>Thermoanaerobacteraceae</taxon>
        <taxon>Caldanaerobacter</taxon>
    </lineage>
</organism>
<evidence type="ECO:0000255" key="1">
    <source>
        <dbReference type="HAMAP-Rule" id="MF_00251"/>
    </source>
</evidence>
<evidence type="ECO:0000305" key="2"/>
<protein>
    <recommendedName>
        <fullName evidence="1">Large ribosomal subunit protein bL36</fullName>
    </recommendedName>
    <alternativeName>
        <fullName evidence="2">50S ribosomal protein L36</fullName>
    </alternativeName>
</protein>
<feature type="chain" id="PRO_0000126286" description="Large ribosomal subunit protein bL36">
    <location>
        <begin position="1"/>
        <end position="37"/>
    </location>
</feature>
<dbReference type="EMBL" id="AE008691">
    <property type="protein sequence ID" value="AAM25411.1"/>
    <property type="molecule type" value="Genomic_DNA"/>
</dbReference>
<dbReference type="RefSeq" id="WP_011026314.1">
    <property type="nucleotide sequence ID" value="NZ_JANUCV010000001.1"/>
</dbReference>
<dbReference type="SMR" id="Q8R7X8"/>
<dbReference type="STRING" id="273068.TTE2267"/>
<dbReference type="KEGG" id="tte:TTE2267"/>
<dbReference type="eggNOG" id="COG0257">
    <property type="taxonomic scope" value="Bacteria"/>
</dbReference>
<dbReference type="HOGENOM" id="CLU_135723_6_2_9"/>
<dbReference type="OrthoDB" id="9802520at2"/>
<dbReference type="Proteomes" id="UP000000555">
    <property type="component" value="Chromosome"/>
</dbReference>
<dbReference type="GO" id="GO:0005737">
    <property type="term" value="C:cytoplasm"/>
    <property type="evidence" value="ECO:0007669"/>
    <property type="project" value="UniProtKB-ARBA"/>
</dbReference>
<dbReference type="GO" id="GO:1990904">
    <property type="term" value="C:ribonucleoprotein complex"/>
    <property type="evidence" value="ECO:0007669"/>
    <property type="project" value="UniProtKB-KW"/>
</dbReference>
<dbReference type="GO" id="GO:0005840">
    <property type="term" value="C:ribosome"/>
    <property type="evidence" value="ECO:0007669"/>
    <property type="project" value="UniProtKB-KW"/>
</dbReference>
<dbReference type="GO" id="GO:0003735">
    <property type="term" value="F:structural constituent of ribosome"/>
    <property type="evidence" value="ECO:0007669"/>
    <property type="project" value="InterPro"/>
</dbReference>
<dbReference type="GO" id="GO:0006412">
    <property type="term" value="P:translation"/>
    <property type="evidence" value="ECO:0007669"/>
    <property type="project" value="UniProtKB-UniRule"/>
</dbReference>
<dbReference type="HAMAP" id="MF_00251">
    <property type="entry name" value="Ribosomal_bL36"/>
    <property type="match status" value="1"/>
</dbReference>
<dbReference type="InterPro" id="IPR000473">
    <property type="entry name" value="Ribosomal_bL36"/>
</dbReference>
<dbReference type="InterPro" id="IPR035977">
    <property type="entry name" value="Ribosomal_bL36_sp"/>
</dbReference>
<dbReference type="NCBIfam" id="TIGR01022">
    <property type="entry name" value="rpmJ_bact"/>
    <property type="match status" value="1"/>
</dbReference>
<dbReference type="PANTHER" id="PTHR42888">
    <property type="entry name" value="50S RIBOSOMAL PROTEIN L36, CHLOROPLASTIC"/>
    <property type="match status" value="1"/>
</dbReference>
<dbReference type="PANTHER" id="PTHR42888:SF1">
    <property type="entry name" value="LARGE RIBOSOMAL SUBUNIT PROTEIN BL36C"/>
    <property type="match status" value="1"/>
</dbReference>
<dbReference type="Pfam" id="PF00444">
    <property type="entry name" value="Ribosomal_L36"/>
    <property type="match status" value="1"/>
</dbReference>
<dbReference type="SUPFAM" id="SSF57840">
    <property type="entry name" value="Ribosomal protein L36"/>
    <property type="match status" value="1"/>
</dbReference>
<dbReference type="PROSITE" id="PS00828">
    <property type="entry name" value="RIBOSOMAL_L36"/>
    <property type="match status" value="1"/>
</dbReference>
<comment type="similarity">
    <text evidence="1">Belongs to the bacterial ribosomal protein bL36 family.</text>
</comment>
<accession>Q8R7X8</accession>
<reference key="1">
    <citation type="journal article" date="2002" name="Genome Res.">
        <title>A complete sequence of the T. tengcongensis genome.</title>
        <authorList>
            <person name="Bao Q."/>
            <person name="Tian Y."/>
            <person name="Li W."/>
            <person name="Xu Z."/>
            <person name="Xuan Z."/>
            <person name="Hu S."/>
            <person name="Dong W."/>
            <person name="Yang J."/>
            <person name="Chen Y."/>
            <person name="Xue Y."/>
            <person name="Xu Y."/>
            <person name="Lai X."/>
            <person name="Huang L."/>
            <person name="Dong X."/>
            <person name="Ma Y."/>
            <person name="Ling L."/>
            <person name="Tan H."/>
            <person name="Chen R."/>
            <person name="Wang J."/>
            <person name="Yu J."/>
            <person name="Yang H."/>
        </authorList>
    </citation>
    <scope>NUCLEOTIDE SEQUENCE [LARGE SCALE GENOMIC DNA]</scope>
    <source>
        <strain>DSM 15242 / JCM 11007 / NBRC 100824 / MB4</strain>
    </source>
</reference>